<gene>
    <name type="ordered locus">RC0045</name>
</gene>
<name>Y045_RICCN</name>
<dbReference type="EMBL" id="AE006914">
    <property type="protein sequence ID" value="AAL02583.1"/>
    <property type="molecule type" value="Genomic_DNA"/>
</dbReference>
<dbReference type="PIR" id="E97705">
    <property type="entry name" value="E97705"/>
</dbReference>
<dbReference type="SMR" id="Q92JM2"/>
<dbReference type="KEGG" id="rco:RC0045"/>
<dbReference type="HOGENOM" id="CLU_2208076_0_0_5"/>
<dbReference type="Proteomes" id="UP000000816">
    <property type="component" value="Chromosome"/>
</dbReference>
<dbReference type="GO" id="GO:0016020">
    <property type="term" value="C:membrane"/>
    <property type="evidence" value="ECO:0007669"/>
    <property type="project" value="UniProtKB-SubCell"/>
</dbReference>
<protein>
    <recommendedName>
        <fullName>Uncharacterized protein RC0045</fullName>
    </recommendedName>
</protein>
<reference key="1">
    <citation type="journal article" date="2001" name="Science">
        <title>Mechanisms of evolution in Rickettsia conorii and R. prowazekii.</title>
        <authorList>
            <person name="Ogata H."/>
            <person name="Audic S."/>
            <person name="Renesto-Audiffren P."/>
            <person name="Fournier P.-E."/>
            <person name="Barbe V."/>
            <person name="Samson D."/>
            <person name="Roux V."/>
            <person name="Cossart P."/>
            <person name="Weissenbach J."/>
            <person name="Claverie J.-M."/>
            <person name="Raoult D."/>
        </authorList>
    </citation>
    <scope>NUCLEOTIDE SEQUENCE [LARGE SCALE GENOMIC DNA]</scope>
    <source>
        <strain>ATCC VR-613 / Malish 7</strain>
    </source>
</reference>
<organism>
    <name type="scientific">Rickettsia conorii (strain ATCC VR-613 / Malish 7)</name>
    <dbReference type="NCBI Taxonomy" id="272944"/>
    <lineage>
        <taxon>Bacteria</taxon>
        <taxon>Pseudomonadati</taxon>
        <taxon>Pseudomonadota</taxon>
        <taxon>Alphaproteobacteria</taxon>
        <taxon>Rickettsiales</taxon>
        <taxon>Rickettsiaceae</taxon>
        <taxon>Rickettsieae</taxon>
        <taxon>Rickettsia</taxon>
        <taxon>spotted fever group</taxon>
    </lineage>
</organism>
<evidence type="ECO:0000255" key="1"/>
<evidence type="ECO:0000305" key="2"/>
<proteinExistence type="predicted"/>
<sequence length="108" mass="12526">MNCPLSLQIVNVSYIVNTNSCSWIAFNNSKYPIKTIKINIININILGKINHMVIFCDNNIVIILWKIMVVIISSIIHRTYIRRWISRRNNIRRKASHACKQPNNTTGC</sequence>
<accession>Q92JM2</accession>
<keyword id="KW-0472">Membrane</keyword>
<keyword id="KW-0812">Transmembrane</keyword>
<keyword id="KW-1133">Transmembrane helix</keyword>
<feature type="chain" id="PRO_0000101437" description="Uncharacterized protein RC0045">
    <location>
        <begin position="1"/>
        <end position="108"/>
    </location>
</feature>
<feature type="transmembrane region" description="Helical" evidence="1">
    <location>
        <begin position="59"/>
        <end position="81"/>
    </location>
</feature>
<comment type="subcellular location">
    <subcellularLocation>
        <location evidence="2">Membrane</location>
        <topology evidence="2">Single-pass membrane protein</topology>
    </subcellularLocation>
</comment>